<reference key="1">
    <citation type="journal article" date="2006" name="Science">
        <title>Large-scale sequence analysis of avian influenza isolates.</title>
        <authorList>
            <person name="Obenauer J.C."/>
            <person name="Denson J."/>
            <person name="Mehta P.K."/>
            <person name="Su X."/>
            <person name="Mukatira S."/>
            <person name="Finkelstein D.B."/>
            <person name="Xu X."/>
            <person name="Wang J."/>
            <person name="Ma J."/>
            <person name="Fan Y."/>
            <person name="Rakestraw K.M."/>
            <person name="Webster R.G."/>
            <person name="Hoffmann E."/>
            <person name="Krauss S."/>
            <person name="Zheng J."/>
            <person name="Zhang Z."/>
            <person name="Naeve C.W."/>
        </authorList>
    </citation>
    <scope>NUCLEOTIDE SEQUENCE [GENOMIC RNA]</scope>
</reference>
<feature type="signal peptide" evidence="1">
    <location>
        <begin position="1"/>
        <end position="18"/>
    </location>
</feature>
<feature type="chain" id="PRO_0000440493" description="Hemagglutinin" evidence="1">
    <location>
        <begin position="19"/>
        <end position="566"/>
    </location>
</feature>
<feature type="chain" id="PRO_5000138822" description="Hemagglutinin HA1 chain" evidence="1">
    <location>
        <begin position="19"/>
        <end position="342"/>
    </location>
</feature>
<feature type="chain" id="PRO_5000138823" description="Hemagglutinin HA2 chain" evidence="1">
    <location>
        <begin position="344"/>
        <end position="566"/>
    </location>
</feature>
<feature type="topological domain" description="Extracellular" evidence="1">
    <location>
        <begin position="19"/>
        <end position="532"/>
    </location>
</feature>
<feature type="transmembrane region" description="Helical" evidence="1">
    <location>
        <begin position="533"/>
        <end position="553"/>
    </location>
</feature>
<feature type="topological domain" description="Cytoplasmic" evidence="1">
    <location>
        <begin position="554"/>
        <end position="566"/>
    </location>
</feature>
<feature type="site" description="Cleavage; by host" evidence="1">
    <location>
        <begin position="343"/>
        <end position="344"/>
    </location>
</feature>
<feature type="lipid moiety-binding region" description="S-palmitoyl cysteine; by host" evidence="1">
    <location>
        <position position="555"/>
    </location>
</feature>
<feature type="lipid moiety-binding region" description="S-palmitoyl cysteine; by host" evidence="1">
    <location>
        <position position="565"/>
    </location>
</feature>
<feature type="glycosylation site" description="N-linked (GlcNAc...) asparagine; by host" evidence="1">
    <location>
        <position position="29"/>
    </location>
</feature>
<feature type="glycosylation site" description="N-linked (GlcNAc...) asparagine; by host" evidence="1">
    <location>
        <position position="54"/>
    </location>
</feature>
<feature type="glycosylation site" description="N-linked (GlcNAc...) asparagine; by host" evidence="1">
    <location>
        <position position="182"/>
    </location>
</feature>
<feature type="glycosylation site" description="N-linked (GlcNAc...) asparagine; by host" evidence="1">
    <location>
        <position position="183"/>
    </location>
</feature>
<feature type="glycosylation site" description="N-linked (GlcNAc...) asparagine; by host" evidence="1">
    <location>
        <position position="305"/>
    </location>
</feature>
<feature type="glycosylation site" description="N-linked (GlcNAc...) asparagine; by host" evidence="1">
    <location>
        <position position="488"/>
    </location>
</feature>
<feature type="glycosylation site" description="N-linked (GlcNAc...) asparagine; by host" evidence="1">
    <location>
        <position position="497"/>
    </location>
</feature>
<feature type="glycosylation site" description="N-linked (GlcNAc...) asparagine; by host" evidence="1">
    <location>
        <position position="501"/>
    </location>
</feature>
<feature type="disulfide bond" description="Interchain (between HA1 and HA2 chains)" evidence="1">
    <location>
        <begin position="22"/>
        <end position="480"/>
    </location>
</feature>
<feature type="disulfide bond" evidence="1">
    <location>
        <begin position="60"/>
        <end position="291"/>
    </location>
</feature>
<feature type="disulfide bond" evidence="1">
    <location>
        <begin position="73"/>
        <end position="85"/>
    </location>
</feature>
<feature type="disulfide bond" evidence="1">
    <location>
        <begin position="108"/>
        <end position="151"/>
    </location>
</feature>
<feature type="disulfide bond" evidence="1">
    <location>
        <begin position="295"/>
        <end position="319"/>
    </location>
</feature>
<feature type="disulfide bond" evidence="1">
    <location>
        <begin position="487"/>
        <end position="491"/>
    </location>
</feature>
<dbReference type="EMBL" id="CY014720">
    <property type="protein sequence ID" value="ABI84601.1"/>
    <property type="molecule type" value="Genomic_RNA"/>
</dbReference>
<dbReference type="SMR" id="Q0A3Y1"/>
<dbReference type="GlyCosmos" id="Q0A3Y1">
    <property type="glycosylation" value="8 sites, No reported glycans"/>
</dbReference>
<dbReference type="Proteomes" id="UP000008581">
    <property type="component" value="Genome"/>
</dbReference>
<dbReference type="GO" id="GO:0020002">
    <property type="term" value="C:host cell plasma membrane"/>
    <property type="evidence" value="ECO:0007669"/>
    <property type="project" value="UniProtKB-SubCell"/>
</dbReference>
<dbReference type="GO" id="GO:0016020">
    <property type="term" value="C:membrane"/>
    <property type="evidence" value="ECO:0007669"/>
    <property type="project" value="UniProtKB-UniRule"/>
</dbReference>
<dbReference type="GO" id="GO:0019031">
    <property type="term" value="C:viral envelope"/>
    <property type="evidence" value="ECO:0007669"/>
    <property type="project" value="UniProtKB-UniRule"/>
</dbReference>
<dbReference type="GO" id="GO:0055036">
    <property type="term" value="C:virion membrane"/>
    <property type="evidence" value="ECO:0007669"/>
    <property type="project" value="UniProtKB-SubCell"/>
</dbReference>
<dbReference type="GO" id="GO:0046789">
    <property type="term" value="F:host cell surface receptor binding"/>
    <property type="evidence" value="ECO:0007669"/>
    <property type="project" value="UniProtKB-UniRule"/>
</dbReference>
<dbReference type="GO" id="GO:0075512">
    <property type="term" value="P:clathrin-dependent endocytosis of virus by host cell"/>
    <property type="evidence" value="ECO:0007669"/>
    <property type="project" value="UniProtKB-UniRule"/>
</dbReference>
<dbReference type="GO" id="GO:0039654">
    <property type="term" value="P:fusion of virus membrane with host endosome membrane"/>
    <property type="evidence" value="ECO:0007669"/>
    <property type="project" value="UniProtKB-UniRule"/>
</dbReference>
<dbReference type="GO" id="GO:0019064">
    <property type="term" value="P:fusion of virus membrane with host plasma membrane"/>
    <property type="evidence" value="ECO:0007669"/>
    <property type="project" value="InterPro"/>
</dbReference>
<dbReference type="GO" id="GO:0046761">
    <property type="term" value="P:viral budding from plasma membrane"/>
    <property type="evidence" value="ECO:0007669"/>
    <property type="project" value="UniProtKB-UniRule"/>
</dbReference>
<dbReference type="GO" id="GO:0019062">
    <property type="term" value="P:virion attachment to host cell"/>
    <property type="evidence" value="ECO:0007669"/>
    <property type="project" value="UniProtKB-KW"/>
</dbReference>
<dbReference type="Gene3D" id="3.90.20.10">
    <property type="match status" value="1"/>
</dbReference>
<dbReference type="Gene3D" id="3.90.209.20">
    <property type="match status" value="1"/>
</dbReference>
<dbReference type="HAMAP" id="MF_04072">
    <property type="entry name" value="INFV_HEMA"/>
    <property type="match status" value="1"/>
</dbReference>
<dbReference type="InterPro" id="IPR008980">
    <property type="entry name" value="Capsid_hemagglutn"/>
</dbReference>
<dbReference type="InterPro" id="IPR013828">
    <property type="entry name" value="Hemagglutn_HA1_a/b_dom_sf"/>
</dbReference>
<dbReference type="InterPro" id="IPR000149">
    <property type="entry name" value="Hemagglutn_influenz_A"/>
</dbReference>
<dbReference type="InterPro" id="IPR001364">
    <property type="entry name" value="Hemagglutn_influenz_A/B"/>
</dbReference>
<dbReference type="Pfam" id="PF00509">
    <property type="entry name" value="Hemagglutinin"/>
    <property type="match status" value="1"/>
</dbReference>
<dbReference type="PRINTS" id="PR00330">
    <property type="entry name" value="HEMAGGLUTN1"/>
</dbReference>
<dbReference type="PRINTS" id="PR00329">
    <property type="entry name" value="HEMAGGLUTN12"/>
</dbReference>
<dbReference type="SUPFAM" id="SSF58064">
    <property type="entry name" value="Influenza hemagglutinin (stalk)"/>
    <property type="match status" value="1"/>
</dbReference>
<dbReference type="SUPFAM" id="SSF49818">
    <property type="entry name" value="Viral protein domain"/>
    <property type="match status" value="1"/>
</dbReference>
<organismHost>
    <name type="scientific">Aves</name>
    <dbReference type="NCBI Taxonomy" id="8782"/>
</organismHost>
<proteinExistence type="inferred from homology"/>
<comment type="function">
    <text evidence="1">Binds to sialic acid-containing receptors on the cell surface, bringing about the attachment of the virus particle to the cell. This attachment induces virion internalization either through clathrin-dependent endocytosis or through clathrin- and caveolin-independent pathway. Plays a major role in the determination of host range restriction and virulence. Class I viral fusion protein. Responsible for penetration of the virus into the cell cytoplasm by mediating the fusion of the membrane of the endocytosed virus particle with the endosomal membrane. Low pH in endosomes induces an irreversible conformational change in HA2, releasing the fusion hydrophobic peptide. Several trimers are required to form a competent fusion pore.</text>
</comment>
<comment type="subunit">
    <text evidence="1">Homotrimer of disulfide-linked HA1-HA2.</text>
</comment>
<comment type="subcellular location">
    <subcellularLocation>
        <location evidence="1">Virion membrane</location>
        <topology evidence="1">Single-pass type I membrane protein</topology>
    </subcellularLocation>
    <subcellularLocation>
        <location evidence="1">Host apical cell membrane</location>
        <topology evidence="1">Single-pass type I membrane protein</topology>
    </subcellularLocation>
    <text evidence="1">Targeted to the apical plasma membrane in epithelial polarized cells through a signal present in the transmembrane domain. Associated with glycosphingolipid- and cholesterol-enriched detergent-resistant lipid rafts.</text>
</comment>
<comment type="PTM">
    <text evidence="1">Palmitoylated.</text>
</comment>
<comment type="PTM">
    <text evidence="1">In natural infection, inactive HA is matured into HA1 and HA2 outside the cell by one or more trypsin-like, arginine-specific endoprotease secreted by the bronchial epithelial cells. One identified protease that may be involved in this process is secreted in lungs by club cells.</text>
</comment>
<comment type="miscellaneous">
    <text>Major glycoprotein, comprises over 80% of the envelope proteins present in virus particle.</text>
</comment>
<comment type="miscellaneous">
    <text>The extent of infection into host organism is determined by HA. Influenza viruses bud from the apical surface of polarized epithelial cells (e.g. bronchial epithelial cells) into lumen of lungs and are therefore usually pneumotropic. The reason is that HA is cleaved by tryptase clara which is restricted to lungs. However, HAs of H5 and H7 pantropic avian viruses subtypes can be cleaved by furin and subtilisin-type enzymes, allowing the virus to grow in other organs than lungs.</text>
</comment>
<comment type="miscellaneous">
    <text evidence="2">The influenza A genome consist of 8 RNA segments. Genetic variation of hemagglutinin and/or neuraminidase genes results in the emergence of new influenza strains. The mechanism of variation can be the result of point mutations or the result of genetic reassortment between segments of two different strains.</text>
</comment>
<comment type="similarity">
    <text evidence="1">Belongs to the influenza viruses hemagglutinin family.</text>
</comment>
<evidence type="ECO:0000255" key="1">
    <source>
        <dbReference type="HAMAP-Rule" id="MF_04072"/>
    </source>
</evidence>
<evidence type="ECO:0000305" key="2"/>
<organism>
    <name type="scientific">Influenza A virus (strain A/Gull/Minnesota/945/1980 H13N6)</name>
    <dbReference type="NCBI Taxonomy" id="385597"/>
    <lineage>
        <taxon>Viruses</taxon>
        <taxon>Riboviria</taxon>
        <taxon>Orthornavirae</taxon>
        <taxon>Negarnaviricota</taxon>
        <taxon>Polyploviricotina</taxon>
        <taxon>Insthoviricetes</taxon>
        <taxon>Articulavirales</taxon>
        <taxon>Orthomyxoviridae</taxon>
        <taxon>Alphainfluenzavirus</taxon>
        <taxon>Alphainfluenzavirus influenzae</taxon>
        <taxon>Influenza A virus</taxon>
    </lineage>
</organism>
<sequence length="566" mass="63198">MDIRAIVISLLISTCVQADRICVGYLSTNSTEKVDTLLESDVPVTSSIDLVETNHTGTYCSLDGISPVHLGDCSFEGWIVGNPACTSNFGIREWSYLIEDPSAPHGLCYPGELDNNGELRHLFSGIRSFSRTELIAPSSWGEVNDGATSACRDNTGTSSFYRNLIWFVKKDNRYPVISRTYNNTTGRDVLVMWGIHHPISTDETKLLYVNSDPYTLVTTSSWSKKYKLETGVRPGYNGQRSWMKIYWVLMHPGESITFESNGGLLAPRYGYIIEEYGKGRIFQSPIRIARCNTRCQTSVGGINTNKTFQNIERNALGNCPKYIKSGQLKLATGLRNVPATSNRGLFGAIAGFIEGGWPGLINGWYGFQHQNEQGVGIAADKESTQKAIDQITTKINNIIDKMNGNYDSIRGEFSQVEQRINMLADRIDDAVTDVWSYNAKLLVLLENDKTLDMHDANVRNLHEQVRKTLKANAIDEGNGCFELLHKCNDSCMETIRNGTYNHSEYAEESKLKRQEIEGIKLESEDNVYKALSIYSCIASSIVLVGLILAFIMWTCNSGNCRFNVCI</sequence>
<keyword id="KW-1167">Clathrin- and caveolin-independent endocytosis of virus by host</keyword>
<keyword id="KW-1165">Clathrin-mediated endocytosis of virus by host</keyword>
<keyword id="KW-1015">Disulfide bond</keyword>
<keyword id="KW-1170">Fusion of virus membrane with host endosomal membrane</keyword>
<keyword id="KW-1168">Fusion of virus membrane with host membrane</keyword>
<keyword id="KW-0325">Glycoprotein</keyword>
<keyword id="KW-0348">Hemagglutinin</keyword>
<keyword id="KW-1032">Host cell membrane</keyword>
<keyword id="KW-1043">Host membrane</keyword>
<keyword id="KW-0945">Host-virus interaction</keyword>
<keyword id="KW-0449">Lipoprotein</keyword>
<keyword id="KW-0472">Membrane</keyword>
<keyword id="KW-0564">Palmitate</keyword>
<keyword id="KW-0732">Signal</keyword>
<keyword id="KW-0812">Transmembrane</keyword>
<keyword id="KW-1133">Transmembrane helix</keyword>
<keyword id="KW-1161">Viral attachment to host cell</keyword>
<keyword id="KW-0261">Viral envelope protein</keyword>
<keyword id="KW-1162">Viral penetration into host cytoplasm</keyword>
<keyword id="KW-0946">Virion</keyword>
<keyword id="KW-1164">Virus endocytosis by host</keyword>
<keyword id="KW-1160">Virus entry into host cell</keyword>
<gene>
    <name evidence="1" type="primary">HA</name>
</gene>
<name>HEMA_I80AD</name>
<protein>
    <recommendedName>
        <fullName evidence="1">Hemagglutinin</fullName>
    </recommendedName>
    <component>
        <recommendedName>
            <fullName evidence="1">Hemagglutinin HA1 chain</fullName>
        </recommendedName>
    </component>
    <component>
        <recommendedName>
            <fullName evidence="1">Hemagglutinin HA2 chain</fullName>
        </recommendedName>
    </component>
</protein>
<accession>Q0A3Y1</accession>